<gene>
    <name evidence="1" type="primary">ileS</name>
    <name type="ordered locus">BH02580</name>
</gene>
<comment type="function">
    <text evidence="1">Catalyzes the attachment of isoleucine to tRNA(Ile). As IleRS can inadvertently accommodate and process structurally similar amino acids such as valine, to avoid such errors it has two additional distinct tRNA(Ile)-dependent editing activities. One activity is designated as 'pretransfer' editing and involves the hydrolysis of activated Val-AMP. The other activity is designated 'posttransfer' editing and involves deacylation of mischarged Val-tRNA(Ile).</text>
</comment>
<comment type="catalytic activity">
    <reaction evidence="1">
        <text>tRNA(Ile) + L-isoleucine + ATP = L-isoleucyl-tRNA(Ile) + AMP + diphosphate</text>
        <dbReference type="Rhea" id="RHEA:11060"/>
        <dbReference type="Rhea" id="RHEA-COMP:9666"/>
        <dbReference type="Rhea" id="RHEA-COMP:9695"/>
        <dbReference type="ChEBI" id="CHEBI:30616"/>
        <dbReference type="ChEBI" id="CHEBI:33019"/>
        <dbReference type="ChEBI" id="CHEBI:58045"/>
        <dbReference type="ChEBI" id="CHEBI:78442"/>
        <dbReference type="ChEBI" id="CHEBI:78528"/>
        <dbReference type="ChEBI" id="CHEBI:456215"/>
        <dbReference type="EC" id="6.1.1.5"/>
    </reaction>
</comment>
<comment type="subunit">
    <text evidence="1">Monomer.</text>
</comment>
<comment type="subcellular location">
    <subcellularLocation>
        <location evidence="1">Cytoplasm</location>
    </subcellularLocation>
</comment>
<comment type="domain">
    <text evidence="1">IleRS has two distinct active sites: one for aminoacylation and one for editing. The misactivated valine is translocated from the active site to the editing site, which sterically excludes the correctly activated isoleucine. The single editing site contains two valyl binding pockets, one specific for each substrate (Val-AMP or Val-tRNA(Ile)).</text>
</comment>
<comment type="similarity">
    <text evidence="1">Belongs to the class-I aminoacyl-tRNA synthetase family. IleS type 1 subfamily.</text>
</comment>
<keyword id="KW-0030">Aminoacyl-tRNA synthetase</keyword>
<keyword id="KW-0067">ATP-binding</keyword>
<keyword id="KW-0963">Cytoplasm</keyword>
<keyword id="KW-0436">Ligase</keyword>
<keyword id="KW-0547">Nucleotide-binding</keyword>
<keyword id="KW-0648">Protein biosynthesis</keyword>
<accession>Q6G4S5</accession>
<proteinExistence type="inferred from homology"/>
<dbReference type="EC" id="6.1.1.5" evidence="1"/>
<dbReference type="EMBL" id="BX897699">
    <property type="protein sequence ID" value="CAF27070.1"/>
    <property type="molecule type" value="Genomic_DNA"/>
</dbReference>
<dbReference type="RefSeq" id="WP_011180208.1">
    <property type="nucleotide sequence ID" value="NZ_LRIJ02000001.1"/>
</dbReference>
<dbReference type="SMR" id="Q6G4S5"/>
<dbReference type="PaxDb" id="283166-BH02580"/>
<dbReference type="EnsemblBacteria" id="CAF27070">
    <property type="protein sequence ID" value="CAF27070"/>
    <property type="gene ID" value="BH02580"/>
</dbReference>
<dbReference type="GeneID" id="92984926"/>
<dbReference type="KEGG" id="bhe:BH02580"/>
<dbReference type="eggNOG" id="COG0060">
    <property type="taxonomic scope" value="Bacteria"/>
</dbReference>
<dbReference type="OrthoDB" id="9810365at2"/>
<dbReference type="Proteomes" id="UP000000421">
    <property type="component" value="Chromosome"/>
</dbReference>
<dbReference type="GO" id="GO:0005829">
    <property type="term" value="C:cytosol"/>
    <property type="evidence" value="ECO:0007669"/>
    <property type="project" value="TreeGrafter"/>
</dbReference>
<dbReference type="GO" id="GO:0002161">
    <property type="term" value="F:aminoacyl-tRNA deacylase activity"/>
    <property type="evidence" value="ECO:0007669"/>
    <property type="project" value="InterPro"/>
</dbReference>
<dbReference type="GO" id="GO:0005524">
    <property type="term" value="F:ATP binding"/>
    <property type="evidence" value="ECO:0007669"/>
    <property type="project" value="UniProtKB-UniRule"/>
</dbReference>
<dbReference type="GO" id="GO:0004822">
    <property type="term" value="F:isoleucine-tRNA ligase activity"/>
    <property type="evidence" value="ECO:0007669"/>
    <property type="project" value="UniProtKB-UniRule"/>
</dbReference>
<dbReference type="GO" id="GO:0000049">
    <property type="term" value="F:tRNA binding"/>
    <property type="evidence" value="ECO:0007669"/>
    <property type="project" value="InterPro"/>
</dbReference>
<dbReference type="GO" id="GO:0006428">
    <property type="term" value="P:isoleucyl-tRNA aminoacylation"/>
    <property type="evidence" value="ECO:0007669"/>
    <property type="project" value="UniProtKB-UniRule"/>
</dbReference>
<dbReference type="CDD" id="cd07960">
    <property type="entry name" value="Anticodon_Ia_Ile_BEm"/>
    <property type="match status" value="1"/>
</dbReference>
<dbReference type="FunFam" id="3.40.50.620:FF:000042">
    <property type="entry name" value="Isoleucine--tRNA ligase"/>
    <property type="match status" value="1"/>
</dbReference>
<dbReference type="Gene3D" id="1.10.730.20">
    <property type="match status" value="1"/>
</dbReference>
<dbReference type="Gene3D" id="3.40.50.620">
    <property type="entry name" value="HUPs"/>
    <property type="match status" value="2"/>
</dbReference>
<dbReference type="Gene3D" id="3.90.740.10">
    <property type="entry name" value="Valyl/Leucyl/Isoleucyl-tRNA synthetase, editing domain"/>
    <property type="match status" value="1"/>
</dbReference>
<dbReference type="HAMAP" id="MF_02002">
    <property type="entry name" value="Ile_tRNA_synth_type1"/>
    <property type="match status" value="1"/>
</dbReference>
<dbReference type="InterPro" id="IPR001412">
    <property type="entry name" value="aa-tRNA-synth_I_CS"/>
</dbReference>
<dbReference type="InterPro" id="IPR002300">
    <property type="entry name" value="aa-tRNA-synth_Ia"/>
</dbReference>
<dbReference type="InterPro" id="IPR033708">
    <property type="entry name" value="Anticodon_Ile_BEm"/>
</dbReference>
<dbReference type="InterPro" id="IPR002301">
    <property type="entry name" value="Ile-tRNA-ligase"/>
</dbReference>
<dbReference type="InterPro" id="IPR023585">
    <property type="entry name" value="Ile-tRNA-ligase_type1"/>
</dbReference>
<dbReference type="InterPro" id="IPR050081">
    <property type="entry name" value="Ile-tRNA_ligase"/>
</dbReference>
<dbReference type="InterPro" id="IPR013155">
    <property type="entry name" value="M/V/L/I-tRNA-synth_anticd-bd"/>
</dbReference>
<dbReference type="InterPro" id="IPR014729">
    <property type="entry name" value="Rossmann-like_a/b/a_fold"/>
</dbReference>
<dbReference type="InterPro" id="IPR009080">
    <property type="entry name" value="tRNAsynth_Ia_anticodon-bd"/>
</dbReference>
<dbReference type="InterPro" id="IPR009008">
    <property type="entry name" value="Val/Leu/Ile-tRNA-synth_edit"/>
</dbReference>
<dbReference type="NCBIfam" id="TIGR00392">
    <property type="entry name" value="ileS"/>
    <property type="match status" value="1"/>
</dbReference>
<dbReference type="PANTHER" id="PTHR42765:SF1">
    <property type="entry name" value="ISOLEUCINE--TRNA LIGASE, MITOCHONDRIAL"/>
    <property type="match status" value="1"/>
</dbReference>
<dbReference type="PANTHER" id="PTHR42765">
    <property type="entry name" value="SOLEUCYL-TRNA SYNTHETASE"/>
    <property type="match status" value="1"/>
</dbReference>
<dbReference type="Pfam" id="PF08264">
    <property type="entry name" value="Anticodon_1"/>
    <property type="match status" value="1"/>
</dbReference>
<dbReference type="Pfam" id="PF00133">
    <property type="entry name" value="tRNA-synt_1"/>
    <property type="match status" value="1"/>
</dbReference>
<dbReference type="PRINTS" id="PR00984">
    <property type="entry name" value="TRNASYNTHILE"/>
</dbReference>
<dbReference type="SUPFAM" id="SSF47323">
    <property type="entry name" value="Anticodon-binding domain of a subclass of class I aminoacyl-tRNA synthetases"/>
    <property type="match status" value="1"/>
</dbReference>
<dbReference type="SUPFAM" id="SSF52374">
    <property type="entry name" value="Nucleotidylyl transferase"/>
    <property type="match status" value="1"/>
</dbReference>
<dbReference type="SUPFAM" id="SSF50677">
    <property type="entry name" value="ValRS/IleRS/LeuRS editing domain"/>
    <property type="match status" value="1"/>
</dbReference>
<dbReference type="PROSITE" id="PS00178">
    <property type="entry name" value="AA_TRNA_LIGASE_I"/>
    <property type="match status" value="1"/>
</dbReference>
<feature type="chain" id="PRO_0000098353" description="Isoleucine--tRNA ligase">
    <location>
        <begin position="1"/>
        <end position="971"/>
    </location>
</feature>
<feature type="short sequence motif" description="'HIGH' region">
    <location>
        <begin position="64"/>
        <end position="74"/>
    </location>
</feature>
<feature type="short sequence motif" description="'KMSKS' region">
    <location>
        <begin position="643"/>
        <end position="647"/>
    </location>
</feature>
<feature type="binding site" evidence="1">
    <location>
        <position position="602"/>
    </location>
    <ligand>
        <name>L-isoleucyl-5'-AMP</name>
        <dbReference type="ChEBI" id="CHEBI:178002"/>
    </ligand>
</feature>
<feature type="binding site" evidence="1">
    <location>
        <position position="646"/>
    </location>
    <ligand>
        <name>ATP</name>
        <dbReference type="ChEBI" id="CHEBI:30616"/>
    </ligand>
</feature>
<name>SYI_BARHE</name>
<evidence type="ECO:0000255" key="1">
    <source>
        <dbReference type="HAMAP-Rule" id="MF_02002"/>
    </source>
</evidence>
<sequence>MTVKNETVDYSKTLYLPQTNFPMRAGLPQKELELMERWEKRGLYAQLRQQAKDRPLYTLHDGPPYANGHIHIGHALNKVLKDVIIRSFQMRGFNANYVPGWDCHGLPIEWKIEEKYRAQGKNKDDVPLNEFRQECRQFAQHWITVQSEEFKRLGVVGDFNRPYTTMAFHAEARIASELMKFALSDQIYRGSKPVMWSVVERTALAEAEIEYHDHESDVIWVKFPVLQADSKDLYDAYVVIWTTTPWTIPANRAVSYSSQISYSIYEVKSAENDFGPQVGEKLLFADALVMSCAEKAKLVLKRLRVISAKEFKTLVLSHPLKGLAGGYNNKIAMLDGSHVTESAGTGFVHTAPSHGREDFEIWNAYKPLLEQSGIDSSIPFPVDDAGFYTKDAPGFGPDRKGGAIRVIDDNGKMGDANKEVINALIKADRLFARGRLKHSYPHSWRSKKPIIFRNTPQWFISMDKDLGDGSTLRSRALKAISMTRFVPSSGQNRLASMIADRPDWVLSRQRAWGVPICIFANEDGVILKDERVNERILRAFEAEGADAWFAEGARERFLGERAHESWIQVVDILDVWFDSGASHSFVLEDRDDLNWPADVYFEGSDQHRGWFQSSLLESCGTRACSPYKAVITHGFTLDENGKKMSKSLGNTVVPQEIIKTFGADIFRLWVMTTDYWEDQRLGKQILQTNVDSYRKLRNAIRWMLGTLAHDEGEEISYCALPDLEKLILHRLSELDQLVNRAYDDFDFKKIMRALLDFSITELSAFYFDIRKDSLYCDPPSSKKRKASLQVVREIFERMVIWLAPMLPFTMEEAWLERYPESTSVHLEQFRPVPMEWQNESLAERWKKIRQVRKVVTGALELERADKRIGSSLEAAPIVFISNPVLREALENLDMAEICITSALTITQGVPPSDAFILSDVEGVGVYPRKALGTKCARSWRYTQDVGSDPTYPDVSARDAAALRELQVLGKI</sequence>
<reference key="1">
    <citation type="journal article" date="2004" name="Proc. Natl. Acad. Sci. U.S.A.">
        <title>The louse-borne human pathogen Bartonella quintana is a genomic derivative of the zoonotic agent Bartonella henselae.</title>
        <authorList>
            <person name="Alsmark U.C.M."/>
            <person name="Frank A.C."/>
            <person name="Karlberg E.O."/>
            <person name="Legault B.-A."/>
            <person name="Ardell D.H."/>
            <person name="Canbaeck B."/>
            <person name="Eriksson A.-S."/>
            <person name="Naeslund A.K."/>
            <person name="Handley S.A."/>
            <person name="Huvet M."/>
            <person name="La Scola B."/>
            <person name="Holmberg M."/>
            <person name="Andersson S.G.E."/>
        </authorList>
    </citation>
    <scope>NUCLEOTIDE SEQUENCE [LARGE SCALE GENOMIC DNA]</scope>
    <source>
        <strain>ATCC 49882 / DSM 28221 / CCUG 30454 / Houston 1</strain>
    </source>
</reference>
<organism>
    <name type="scientific">Bartonella henselae (strain ATCC 49882 / DSM 28221 / CCUG 30454 / Houston 1)</name>
    <name type="common">Rochalimaea henselae</name>
    <dbReference type="NCBI Taxonomy" id="283166"/>
    <lineage>
        <taxon>Bacteria</taxon>
        <taxon>Pseudomonadati</taxon>
        <taxon>Pseudomonadota</taxon>
        <taxon>Alphaproteobacteria</taxon>
        <taxon>Hyphomicrobiales</taxon>
        <taxon>Bartonellaceae</taxon>
        <taxon>Bartonella</taxon>
    </lineage>
</organism>
<protein>
    <recommendedName>
        <fullName evidence="1">Isoleucine--tRNA ligase</fullName>
        <ecNumber evidence="1">6.1.1.5</ecNumber>
    </recommendedName>
    <alternativeName>
        <fullName evidence="1">Isoleucyl-tRNA synthetase</fullName>
        <shortName evidence="1">IleRS</shortName>
    </alternativeName>
</protein>